<comment type="function">
    <text evidence="1">IGPS catalyzes the conversion of PRFAR and glutamine to IGP, AICAR and glutamate. The HisF subunit catalyzes the cyclization activity that produces IGP and AICAR from PRFAR using the ammonia provided by the HisH subunit.</text>
</comment>
<comment type="catalytic activity">
    <reaction evidence="1">
        <text>5-[(5-phospho-1-deoxy-D-ribulos-1-ylimino)methylamino]-1-(5-phospho-beta-D-ribosyl)imidazole-4-carboxamide + L-glutamine = D-erythro-1-(imidazol-4-yl)glycerol 3-phosphate + 5-amino-1-(5-phospho-beta-D-ribosyl)imidazole-4-carboxamide + L-glutamate + H(+)</text>
        <dbReference type="Rhea" id="RHEA:24793"/>
        <dbReference type="ChEBI" id="CHEBI:15378"/>
        <dbReference type="ChEBI" id="CHEBI:29985"/>
        <dbReference type="ChEBI" id="CHEBI:58278"/>
        <dbReference type="ChEBI" id="CHEBI:58359"/>
        <dbReference type="ChEBI" id="CHEBI:58475"/>
        <dbReference type="ChEBI" id="CHEBI:58525"/>
        <dbReference type="EC" id="4.3.2.10"/>
    </reaction>
</comment>
<comment type="pathway">
    <text evidence="1">Amino-acid biosynthesis; L-histidine biosynthesis; L-histidine from 5-phospho-alpha-D-ribose 1-diphosphate: step 5/9.</text>
</comment>
<comment type="subunit">
    <text evidence="1">Heterodimer of HisH and HisF.</text>
</comment>
<comment type="subcellular location">
    <subcellularLocation>
        <location evidence="1">Cytoplasm</location>
    </subcellularLocation>
</comment>
<comment type="similarity">
    <text evidence="1">Belongs to the HisA/HisF family.</text>
</comment>
<name>HIS6_PSEA8</name>
<organism>
    <name type="scientific">Pseudomonas aeruginosa (strain LESB58)</name>
    <dbReference type="NCBI Taxonomy" id="557722"/>
    <lineage>
        <taxon>Bacteria</taxon>
        <taxon>Pseudomonadati</taxon>
        <taxon>Pseudomonadota</taxon>
        <taxon>Gammaproteobacteria</taxon>
        <taxon>Pseudomonadales</taxon>
        <taxon>Pseudomonadaceae</taxon>
        <taxon>Pseudomonas</taxon>
    </lineage>
</organism>
<reference key="1">
    <citation type="journal article" date="2009" name="Genome Res.">
        <title>Newly introduced genomic prophage islands are critical determinants of in vivo competitiveness in the Liverpool epidemic strain of Pseudomonas aeruginosa.</title>
        <authorList>
            <person name="Winstanley C."/>
            <person name="Langille M.G.I."/>
            <person name="Fothergill J.L."/>
            <person name="Kukavica-Ibrulj I."/>
            <person name="Paradis-Bleau C."/>
            <person name="Sanschagrin F."/>
            <person name="Thomson N.R."/>
            <person name="Winsor G.L."/>
            <person name="Quail M.A."/>
            <person name="Lennard N."/>
            <person name="Bignell A."/>
            <person name="Clarke L."/>
            <person name="Seeger K."/>
            <person name="Saunders D."/>
            <person name="Harris D."/>
            <person name="Parkhill J."/>
            <person name="Hancock R.E.W."/>
            <person name="Brinkman F.S.L."/>
            <person name="Levesque R.C."/>
        </authorList>
    </citation>
    <scope>NUCLEOTIDE SEQUENCE [LARGE SCALE GENOMIC DNA]</scope>
    <source>
        <strain>LESB58</strain>
    </source>
</reference>
<protein>
    <recommendedName>
        <fullName evidence="1">Imidazole glycerol phosphate synthase subunit HisF</fullName>
        <ecNumber evidence="1">4.3.2.10</ecNumber>
    </recommendedName>
    <alternativeName>
        <fullName evidence="1">IGP synthase cyclase subunit</fullName>
    </alternativeName>
    <alternativeName>
        <fullName evidence="1">IGP synthase subunit HisF</fullName>
    </alternativeName>
    <alternativeName>
        <fullName evidence="1">ImGP synthase subunit HisF</fullName>
        <shortName evidence="1">IGPS subunit HisF</shortName>
    </alternativeName>
</protein>
<keyword id="KW-0028">Amino-acid biosynthesis</keyword>
<keyword id="KW-0963">Cytoplasm</keyword>
<keyword id="KW-0368">Histidine biosynthesis</keyword>
<keyword id="KW-0456">Lyase</keyword>
<evidence type="ECO:0000255" key="1">
    <source>
        <dbReference type="HAMAP-Rule" id="MF_01013"/>
    </source>
</evidence>
<proteinExistence type="inferred from homology"/>
<feature type="chain" id="PRO_1000190593" description="Imidazole glycerol phosphate synthase subunit HisF">
    <location>
        <begin position="1"/>
        <end position="256"/>
    </location>
</feature>
<feature type="active site" evidence="1">
    <location>
        <position position="12"/>
    </location>
</feature>
<feature type="active site" evidence="1">
    <location>
        <position position="131"/>
    </location>
</feature>
<dbReference type="EC" id="4.3.2.10" evidence="1"/>
<dbReference type="EMBL" id="FM209186">
    <property type="protein sequence ID" value="CAW30284.1"/>
    <property type="molecule type" value="Genomic_DNA"/>
</dbReference>
<dbReference type="RefSeq" id="WP_003106334.1">
    <property type="nucleotide sequence ID" value="NC_011770.1"/>
</dbReference>
<dbReference type="SMR" id="B7V3N3"/>
<dbReference type="KEGG" id="pag:PLES_55301"/>
<dbReference type="HOGENOM" id="CLU_048577_4_0_6"/>
<dbReference type="UniPathway" id="UPA00031">
    <property type="reaction ID" value="UER00010"/>
</dbReference>
<dbReference type="GO" id="GO:0005737">
    <property type="term" value="C:cytoplasm"/>
    <property type="evidence" value="ECO:0007669"/>
    <property type="project" value="UniProtKB-SubCell"/>
</dbReference>
<dbReference type="GO" id="GO:0000107">
    <property type="term" value="F:imidazoleglycerol-phosphate synthase activity"/>
    <property type="evidence" value="ECO:0007669"/>
    <property type="project" value="UniProtKB-UniRule"/>
</dbReference>
<dbReference type="GO" id="GO:0016829">
    <property type="term" value="F:lyase activity"/>
    <property type="evidence" value="ECO:0007669"/>
    <property type="project" value="UniProtKB-KW"/>
</dbReference>
<dbReference type="GO" id="GO:0000105">
    <property type="term" value="P:L-histidine biosynthetic process"/>
    <property type="evidence" value="ECO:0007669"/>
    <property type="project" value="UniProtKB-UniRule"/>
</dbReference>
<dbReference type="CDD" id="cd04731">
    <property type="entry name" value="HisF"/>
    <property type="match status" value="1"/>
</dbReference>
<dbReference type="FunFam" id="3.20.20.70:FF:000006">
    <property type="entry name" value="Imidazole glycerol phosphate synthase subunit HisF"/>
    <property type="match status" value="1"/>
</dbReference>
<dbReference type="Gene3D" id="3.20.20.70">
    <property type="entry name" value="Aldolase class I"/>
    <property type="match status" value="1"/>
</dbReference>
<dbReference type="HAMAP" id="MF_01013">
    <property type="entry name" value="HisF"/>
    <property type="match status" value="1"/>
</dbReference>
<dbReference type="InterPro" id="IPR013785">
    <property type="entry name" value="Aldolase_TIM"/>
</dbReference>
<dbReference type="InterPro" id="IPR006062">
    <property type="entry name" value="His_biosynth"/>
</dbReference>
<dbReference type="InterPro" id="IPR004651">
    <property type="entry name" value="HisF"/>
</dbReference>
<dbReference type="InterPro" id="IPR050064">
    <property type="entry name" value="IGPS_HisA/HisF"/>
</dbReference>
<dbReference type="InterPro" id="IPR011060">
    <property type="entry name" value="RibuloseP-bd_barrel"/>
</dbReference>
<dbReference type="NCBIfam" id="TIGR00735">
    <property type="entry name" value="hisF"/>
    <property type="match status" value="1"/>
</dbReference>
<dbReference type="PANTHER" id="PTHR21235:SF2">
    <property type="entry name" value="IMIDAZOLE GLYCEROL PHOSPHATE SYNTHASE HISHF"/>
    <property type="match status" value="1"/>
</dbReference>
<dbReference type="PANTHER" id="PTHR21235">
    <property type="entry name" value="IMIDAZOLE GLYCEROL PHOSPHATE SYNTHASE SUBUNIT HISF/H IGP SYNTHASE SUBUNIT HISF/H"/>
    <property type="match status" value="1"/>
</dbReference>
<dbReference type="Pfam" id="PF00977">
    <property type="entry name" value="His_biosynth"/>
    <property type="match status" value="1"/>
</dbReference>
<dbReference type="SUPFAM" id="SSF51366">
    <property type="entry name" value="Ribulose-phoshate binding barrel"/>
    <property type="match status" value="1"/>
</dbReference>
<sequence>MALAKRIIPCLDVDNGRVVKGVKFENIRDAGDPVEIARRYDEQGADEITFLDITASVDGRDTTLHTVERMASQVFIPLTVGGGVRSVQDIRNLLNAGADKVSINTAAVFNPEFVGEAADRFGSQCIVVAIDAKKVSAPGEAPRWEIFTHGGRKPTGLDAVLWAKKMEDLGAGEILLTSMDQDGVKSGYDLGVTRAISEAVNVPVIASGGVGNLEHLAAGILEGKADAVLAASIFHFGEYTVPEAKAYLASRGIVVR</sequence>
<gene>
    <name evidence="1" type="primary">hisF</name>
    <name type="ordered locus">PLES_55301</name>
</gene>
<accession>B7V3N3</accession>